<organism>
    <name type="scientific">Coxiella burnetii (strain RSA 331 / Henzerling II)</name>
    <dbReference type="NCBI Taxonomy" id="360115"/>
    <lineage>
        <taxon>Bacteria</taxon>
        <taxon>Pseudomonadati</taxon>
        <taxon>Pseudomonadota</taxon>
        <taxon>Gammaproteobacteria</taxon>
        <taxon>Legionellales</taxon>
        <taxon>Coxiellaceae</taxon>
        <taxon>Coxiella</taxon>
    </lineage>
</organism>
<comment type="function">
    <text evidence="1">Binds the lower part of the 30S subunit head. Binds mRNA in the 70S ribosome, positioning it for translation.</text>
</comment>
<comment type="subunit">
    <text evidence="1">Part of the 30S ribosomal subunit. Forms a tight complex with proteins S10 and S14.</text>
</comment>
<comment type="similarity">
    <text evidence="1">Belongs to the universal ribosomal protein uS3 family.</text>
</comment>
<feature type="chain" id="PRO_1000086112" description="Small ribosomal subunit protein uS3">
    <location>
        <begin position="1"/>
        <end position="227"/>
    </location>
</feature>
<feature type="domain" description="KH type-2" evidence="1">
    <location>
        <begin position="39"/>
        <end position="107"/>
    </location>
</feature>
<reference key="1">
    <citation type="submission" date="2007-11" db="EMBL/GenBank/DDBJ databases">
        <title>Genome sequencing of phylogenetically and phenotypically diverse Coxiella burnetii isolates.</title>
        <authorList>
            <person name="Seshadri R."/>
            <person name="Samuel J.E."/>
        </authorList>
    </citation>
    <scope>NUCLEOTIDE SEQUENCE [LARGE SCALE GENOMIC DNA]</scope>
    <source>
        <strain>RSA 331 / Henzerling II</strain>
    </source>
</reference>
<evidence type="ECO:0000255" key="1">
    <source>
        <dbReference type="HAMAP-Rule" id="MF_01309"/>
    </source>
</evidence>
<evidence type="ECO:0000305" key="2"/>
<protein>
    <recommendedName>
        <fullName evidence="1">Small ribosomal subunit protein uS3</fullName>
    </recommendedName>
    <alternativeName>
        <fullName evidence="2">30S ribosomal protein S3</fullName>
    </alternativeName>
</protein>
<name>RS3_COXBR</name>
<gene>
    <name evidence="1" type="primary">rpsC</name>
    <name type="ordered locus">COXBURSA331_A0343</name>
</gene>
<proteinExistence type="inferred from homology"/>
<sequence>MGQKVNPVGMRIGITRDWTSNWYADKKDFADRLNEDLNVRQLLQKRLKGAAVSRIQIERPARNAKIIIHSARPGVIIGKKGGEIEALRDEISKVMKVPVHITIEEVRKPELDAKLVAENIAQQLERRVMFRRAMKRAVQNTLRQGALGVKISVSGRLGGAEIARTEWYREGRVPLHTFRADIDYATASAKTTYGIIGVKVWIFKGEVHAPKPQAEEAAPQETEEEVK</sequence>
<accession>A9NAN0</accession>
<keyword id="KW-0687">Ribonucleoprotein</keyword>
<keyword id="KW-0689">Ribosomal protein</keyword>
<keyword id="KW-0694">RNA-binding</keyword>
<keyword id="KW-0699">rRNA-binding</keyword>
<dbReference type="EMBL" id="CP000890">
    <property type="protein sequence ID" value="ABX77988.1"/>
    <property type="molecule type" value="Genomic_DNA"/>
</dbReference>
<dbReference type="RefSeq" id="WP_005771534.1">
    <property type="nucleotide sequence ID" value="NC_010117.1"/>
</dbReference>
<dbReference type="SMR" id="A9NAN0"/>
<dbReference type="KEGG" id="cbs:COXBURSA331_A0343"/>
<dbReference type="HOGENOM" id="CLU_058591_0_2_6"/>
<dbReference type="GO" id="GO:0022627">
    <property type="term" value="C:cytosolic small ribosomal subunit"/>
    <property type="evidence" value="ECO:0007669"/>
    <property type="project" value="TreeGrafter"/>
</dbReference>
<dbReference type="GO" id="GO:0003729">
    <property type="term" value="F:mRNA binding"/>
    <property type="evidence" value="ECO:0007669"/>
    <property type="project" value="UniProtKB-UniRule"/>
</dbReference>
<dbReference type="GO" id="GO:0019843">
    <property type="term" value="F:rRNA binding"/>
    <property type="evidence" value="ECO:0007669"/>
    <property type="project" value="UniProtKB-UniRule"/>
</dbReference>
<dbReference type="GO" id="GO:0003735">
    <property type="term" value="F:structural constituent of ribosome"/>
    <property type="evidence" value="ECO:0007669"/>
    <property type="project" value="InterPro"/>
</dbReference>
<dbReference type="GO" id="GO:0006412">
    <property type="term" value="P:translation"/>
    <property type="evidence" value="ECO:0007669"/>
    <property type="project" value="UniProtKB-UniRule"/>
</dbReference>
<dbReference type="CDD" id="cd02412">
    <property type="entry name" value="KH-II_30S_S3"/>
    <property type="match status" value="1"/>
</dbReference>
<dbReference type="FunFam" id="3.30.1140.32:FF:000001">
    <property type="entry name" value="30S ribosomal protein S3"/>
    <property type="match status" value="1"/>
</dbReference>
<dbReference type="FunFam" id="3.30.300.20:FF:000001">
    <property type="entry name" value="30S ribosomal protein S3"/>
    <property type="match status" value="1"/>
</dbReference>
<dbReference type="Gene3D" id="3.30.300.20">
    <property type="match status" value="1"/>
</dbReference>
<dbReference type="Gene3D" id="3.30.1140.32">
    <property type="entry name" value="Ribosomal protein S3, C-terminal domain"/>
    <property type="match status" value="1"/>
</dbReference>
<dbReference type="HAMAP" id="MF_01309_B">
    <property type="entry name" value="Ribosomal_uS3_B"/>
    <property type="match status" value="1"/>
</dbReference>
<dbReference type="InterPro" id="IPR004087">
    <property type="entry name" value="KH_dom"/>
</dbReference>
<dbReference type="InterPro" id="IPR015946">
    <property type="entry name" value="KH_dom-like_a/b"/>
</dbReference>
<dbReference type="InterPro" id="IPR004044">
    <property type="entry name" value="KH_dom_type_2"/>
</dbReference>
<dbReference type="InterPro" id="IPR009019">
    <property type="entry name" value="KH_sf_prok-type"/>
</dbReference>
<dbReference type="InterPro" id="IPR036419">
    <property type="entry name" value="Ribosomal_S3_C_sf"/>
</dbReference>
<dbReference type="InterPro" id="IPR005704">
    <property type="entry name" value="Ribosomal_uS3_bac-typ"/>
</dbReference>
<dbReference type="InterPro" id="IPR001351">
    <property type="entry name" value="Ribosomal_uS3_C"/>
</dbReference>
<dbReference type="InterPro" id="IPR018280">
    <property type="entry name" value="Ribosomal_uS3_CS"/>
</dbReference>
<dbReference type="NCBIfam" id="TIGR01009">
    <property type="entry name" value="rpsC_bact"/>
    <property type="match status" value="1"/>
</dbReference>
<dbReference type="PANTHER" id="PTHR11760">
    <property type="entry name" value="30S/40S RIBOSOMAL PROTEIN S3"/>
    <property type="match status" value="1"/>
</dbReference>
<dbReference type="PANTHER" id="PTHR11760:SF19">
    <property type="entry name" value="SMALL RIBOSOMAL SUBUNIT PROTEIN US3C"/>
    <property type="match status" value="1"/>
</dbReference>
<dbReference type="Pfam" id="PF07650">
    <property type="entry name" value="KH_2"/>
    <property type="match status" value="1"/>
</dbReference>
<dbReference type="Pfam" id="PF00189">
    <property type="entry name" value="Ribosomal_S3_C"/>
    <property type="match status" value="1"/>
</dbReference>
<dbReference type="SMART" id="SM00322">
    <property type="entry name" value="KH"/>
    <property type="match status" value="1"/>
</dbReference>
<dbReference type="SUPFAM" id="SSF54814">
    <property type="entry name" value="Prokaryotic type KH domain (KH-domain type II)"/>
    <property type="match status" value="1"/>
</dbReference>
<dbReference type="SUPFAM" id="SSF54821">
    <property type="entry name" value="Ribosomal protein S3 C-terminal domain"/>
    <property type="match status" value="1"/>
</dbReference>
<dbReference type="PROSITE" id="PS50823">
    <property type="entry name" value="KH_TYPE_2"/>
    <property type="match status" value="1"/>
</dbReference>
<dbReference type="PROSITE" id="PS00548">
    <property type="entry name" value="RIBOSOMAL_S3"/>
    <property type="match status" value="1"/>
</dbReference>